<keyword id="KW-1185">Reference proteome</keyword>
<organism>
    <name type="scientific">Human herpesvirus 6A (strain Uganda-1102)</name>
    <name type="common">HHV-6 variant A</name>
    <name type="synonym">Human B lymphotropic virus</name>
    <dbReference type="NCBI Taxonomy" id="10370"/>
    <lineage>
        <taxon>Viruses</taxon>
        <taxon>Duplodnaviria</taxon>
        <taxon>Heunggongvirae</taxon>
        <taxon>Peploviricota</taxon>
        <taxon>Herviviricetes</taxon>
        <taxon>Herpesvirales</taxon>
        <taxon>Orthoherpesviridae</taxon>
        <taxon>Betaherpesvirinae</taxon>
        <taxon>Roseolovirus</taxon>
        <taxon>Roseolovirus humanbeta6a</taxon>
        <taxon>Human betaherpesvirus 6A</taxon>
    </lineage>
</organism>
<dbReference type="EMBL" id="X83413">
    <property type="protein sequence ID" value="CAA58429.1"/>
    <property type="molecule type" value="Genomic_DNA"/>
</dbReference>
<dbReference type="EMBL" id="D10082">
    <property type="protein sequence ID" value="BAA00976.1"/>
    <property type="molecule type" value="Genomic_DNA"/>
</dbReference>
<dbReference type="PIR" id="JQ1647">
    <property type="entry name" value="JQ1647"/>
</dbReference>
<dbReference type="SMR" id="Q01349"/>
<dbReference type="DNASU" id="1487881"/>
<dbReference type="KEGG" id="vg:1487881"/>
<dbReference type="Proteomes" id="UP000009295">
    <property type="component" value="Segment"/>
</dbReference>
<dbReference type="InterPro" id="IPR003360">
    <property type="entry name" value="US22-like"/>
</dbReference>
<dbReference type="Pfam" id="PF02393">
    <property type="entry name" value="US22"/>
    <property type="match status" value="1"/>
</dbReference>
<sequence>MFCGSPFLGISSWSLASAALCPPSCSFSAGRDLRCDAEVPEVKWTAFVRTLVTRPLSADDVWDFVSTFAHCRLALSWPVGAELRFATSDMLGITQAEVAKLSRRYGCCPGMDLTVIGVTIFAEVSALVLVGECGEIYAFNGVFDDALYRLAEDAFGLWKHGLRRFEPVYGSKCLTETGASFFGGMSGVDDVLAFAVSFDKALVPLPWPRGAFFEFAVPGRPEKRWRLIPGGGVAVVIGRFFGRGVTSPLLRRQRVLMDQVGRVYAASLDGGAVVRLSDSFRAFLAMGVRKLFKNHRFPPGHLWTMQLPVTCVHAPVIDLPAVYQLSPHMVERGMPVASCEASTVVRGDCEETETEESTSGDSVLVC</sequence>
<evidence type="ECO:0000305" key="1"/>
<reference key="1">
    <citation type="journal article" date="1995" name="Virology">
        <title>The DNA sequence of human herpesvirus-6: structure, coding content, and genome evolution.</title>
        <authorList>
            <person name="Gompels U.A."/>
            <person name="Nicholas J."/>
            <person name="Lawrence G.L."/>
            <person name="Jones M."/>
            <person name="Thomson B.J."/>
            <person name="Martin M.E.D."/>
            <person name="Efstathiou S."/>
            <person name="Craxton M.A."/>
            <person name="Macaulay H.A."/>
        </authorList>
    </citation>
    <scope>NUCLEOTIDE SEQUENCE [LARGE SCALE GENOMIC DNA]</scope>
</reference>
<reference key="2">
    <citation type="journal article" date="1992" name="J. Gen. Virol.">
        <title>Identification of homologues to the human cytomegalovirus US22 gene family in human herpesvirus 6.</title>
        <authorList>
            <person name="Efstathiou S."/>
            <person name="Lawrence G.L."/>
            <person name="Brown C.M."/>
            <person name="Barrell B.G."/>
        </authorList>
    </citation>
    <scope>NUCLEOTIDE SEQUENCE [GENOMIC DNA] OF 1-357</scope>
</reference>
<gene>
    <name type="primary">U1</name>
    <name type="synonym">SHL1</name>
</gene>
<organismHost>
    <name type="scientific">Homo sapiens</name>
    <name type="common">Human</name>
    <dbReference type="NCBI Taxonomy" id="9606"/>
</organismHost>
<name>VU1_HHV6U</name>
<accession>Q01349</accession>
<comment type="similarity">
    <text evidence="1">Belongs to the herpesviridae US22 family.</text>
</comment>
<feature type="chain" id="PRO_0000116303" description="Protein U1">
    <location>
        <begin position="1"/>
        <end position="366"/>
    </location>
</feature>
<protein>
    <recommendedName>
        <fullName>Protein U1</fullName>
    </recommendedName>
</protein>
<proteinExistence type="inferred from homology"/>